<organism>
    <name type="scientific">Manduca sexta</name>
    <name type="common">Tobacco hawkmoth</name>
    <name type="synonym">Tobacco hornworm</name>
    <dbReference type="NCBI Taxonomy" id="7130"/>
    <lineage>
        <taxon>Eukaryota</taxon>
        <taxon>Metazoa</taxon>
        <taxon>Ecdysozoa</taxon>
        <taxon>Arthropoda</taxon>
        <taxon>Hexapoda</taxon>
        <taxon>Insecta</taxon>
        <taxon>Pterygota</taxon>
        <taxon>Neoptera</taxon>
        <taxon>Endopterygota</taxon>
        <taxon>Lepidoptera</taxon>
        <taxon>Glossata</taxon>
        <taxon>Ditrysia</taxon>
        <taxon>Bombycoidea</taxon>
        <taxon>Sphingidae</taxon>
        <taxon>Sphinginae</taxon>
        <taxon>Sphingini</taxon>
        <taxon>Manduca</taxon>
    </lineage>
</organism>
<keyword id="KW-0479">Metal-binding</keyword>
<keyword id="KW-0539">Nucleus</keyword>
<keyword id="KW-0804">Transcription</keyword>
<keyword id="KW-0805">Transcription regulation</keyword>
<keyword id="KW-0862">Zinc</keyword>
<keyword id="KW-0863">Zinc-finger</keyword>
<dbReference type="EMBL" id="AF117587">
    <property type="protein sequence ID" value="AAF16709.1"/>
    <property type="molecule type" value="mRNA"/>
</dbReference>
<dbReference type="SMR" id="Q9U501"/>
<dbReference type="OrthoDB" id="445983at2759"/>
<dbReference type="GO" id="GO:0008023">
    <property type="term" value="C:transcription elongation factor complex"/>
    <property type="evidence" value="ECO:0007669"/>
    <property type="project" value="TreeGrafter"/>
</dbReference>
<dbReference type="GO" id="GO:0000993">
    <property type="term" value="F:RNA polymerase II complex binding"/>
    <property type="evidence" value="ECO:0007669"/>
    <property type="project" value="TreeGrafter"/>
</dbReference>
<dbReference type="GO" id="GO:0008270">
    <property type="term" value="F:zinc ion binding"/>
    <property type="evidence" value="ECO:0007669"/>
    <property type="project" value="UniProtKB-KW"/>
</dbReference>
<dbReference type="GO" id="GO:0006368">
    <property type="term" value="P:transcription elongation by RNA polymerase II"/>
    <property type="evidence" value="ECO:0007669"/>
    <property type="project" value="TreeGrafter"/>
</dbReference>
<dbReference type="FunFam" id="2.20.25.190:FF:000002">
    <property type="entry name" value="Transcription elongation factor 1 homolog"/>
    <property type="match status" value="1"/>
</dbReference>
<dbReference type="Gene3D" id="2.20.25.190">
    <property type="match status" value="1"/>
</dbReference>
<dbReference type="InterPro" id="IPR007808">
    <property type="entry name" value="Elf1"/>
</dbReference>
<dbReference type="InterPro" id="IPR038567">
    <property type="entry name" value="T_Elf1_sf"/>
</dbReference>
<dbReference type="PANTHER" id="PTHR20934">
    <property type="entry name" value="TRANSCRIPTION ELONGATION FACTOR 1 HOMOLOG"/>
    <property type="match status" value="1"/>
</dbReference>
<dbReference type="PANTHER" id="PTHR20934:SF0">
    <property type="entry name" value="TRANSCRIPTION ELONGATION FACTOR 1 HOMOLOG"/>
    <property type="match status" value="1"/>
</dbReference>
<dbReference type="Pfam" id="PF05129">
    <property type="entry name" value="Zn_ribbon_Elf1"/>
    <property type="match status" value="1"/>
</dbReference>
<dbReference type="SUPFAM" id="SSF57783">
    <property type="entry name" value="Zinc beta-ribbon"/>
    <property type="match status" value="1"/>
</dbReference>
<feature type="chain" id="PRO_0000120945" description="Transcription elongation factor 1 homolog">
    <location>
        <begin position="1"/>
        <end position="82"/>
    </location>
</feature>
<feature type="binding site" evidence="2">
    <location>
        <position position="26"/>
    </location>
    <ligand>
        <name>Zn(2+)</name>
        <dbReference type="ChEBI" id="CHEBI:29105"/>
    </ligand>
</feature>
<feature type="binding site" evidence="2">
    <location>
        <position position="29"/>
    </location>
    <ligand>
        <name>Zn(2+)</name>
        <dbReference type="ChEBI" id="CHEBI:29105"/>
    </ligand>
</feature>
<feature type="binding site" evidence="2">
    <location>
        <position position="50"/>
    </location>
    <ligand>
        <name>Zn(2+)</name>
        <dbReference type="ChEBI" id="CHEBI:29105"/>
    </ligand>
</feature>
<feature type="binding site" evidence="2">
    <location>
        <position position="53"/>
    </location>
    <ligand>
        <name>Zn(2+)</name>
        <dbReference type="ChEBI" id="CHEBI:29105"/>
    </ligand>
</feature>
<reference key="1">
    <citation type="journal article" date="1999" name="Insect Mol. Biol.">
        <title>Diversity of odourant binding proteins revealed by an expressed sequence tag project on male Manduca sexta moth antennae.</title>
        <authorList>
            <person name="Robertson H.M."/>
            <person name="Martos R."/>
            <person name="Sears C.R."/>
            <person name="Todres E.Z."/>
            <person name="Walden K.K.O."/>
            <person name="Nardi J.B."/>
        </authorList>
    </citation>
    <scope>NUCLEOTIDE SEQUENCE [MRNA]</scope>
</reference>
<protein>
    <recommendedName>
        <fullName>Transcription elongation factor 1 homolog</fullName>
    </recommendedName>
</protein>
<name>ELOF1_MANSE</name>
<proteinExistence type="inferred from homology"/>
<sequence length="82" mass="9460">MGRRKSKRKPPPKRKAIEPLDQQFNCPFCNHEKSCEVKMDRAKNTAMIQCTVCLEDFHTTTNVLSEPIDVYNDWVDACESAN</sequence>
<comment type="function">
    <text evidence="1">Transcription elongation factor implicated in the maintenance of proper chromatin structure in actively transcribed regions.</text>
</comment>
<comment type="subcellular location">
    <subcellularLocation>
        <location evidence="1">Nucleus</location>
    </subcellularLocation>
</comment>
<comment type="similarity">
    <text evidence="3">Belongs to the ELOF1 family.</text>
</comment>
<accession>Q9U501</accession>
<evidence type="ECO:0000250" key="1"/>
<evidence type="ECO:0000250" key="2">
    <source>
        <dbReference type="UniProtKB" id="P60003"/>
    </source>
</evidence>
<evidence type="ECO:0000305" key="3"/>